<reference key="1">
    <citation type="journal article" date="1986" name="Cell">
        <title>Genetic variability of the AIDS virus: nucleotide sequence analysis of two isolates from African patients.</title>
        <authorList>
            <person name="Alizon M."/>
            <person name="Wain-Hobson S."/>
            <person name="Montagnier L."/>
            <person name="Sonigo P."/>
        </authorList>
    </citation>
    <scope>NUCLEOTIDE SEQUENCE [GENOMIC DNA]</scope>
</reference>
<reference key="2">
    <citation type="journal article" date="1999" name="Arch. Biochem. Biophys.">
        <title>The ins and outs of HIV Rev.</title>
        <authorList>
            <person name="Hope T.J."/>
        </authorList>
    </citation>
    <scope>REVIEW</scope>
</reference>
<dbReference type="EMBL" id="K03454">
    <property type="protein sequence ID" value="AAA44323.1"/>
    <property type="molecule type" value="Genomic_DNA"/>
</dbReference>
<dbReference type="Proteomes" id="UP000007693">
    <property type="component" value="Segment"/>
</dbReference>
<dbReference type="GO" id="GO:0030430">
    <property type="term" value="C:host cell cytoplasm"/>
    <property type="evidence" value="ECO:0007669"/>
    <property type="project" value="UniProtKB-SubCell"/>
</dbReference>
<dbReference type="GO" id="GO:0044196">
    <property type="term" value="C:host cell nucleolus"/>
    <property type="evidence" value="ECO:0007669"/>
    <property type="project" value="UniProtKB-SubCell"/>
</dbReference>
<dbReference type="GO" id="GO:0003700">
    <property type="term" value="F:DNA-binding transcription factor activity"/>
    <property type="evidence" value="ECO:0007669"/>
    <property type="project" value="UniProtKB-UniRule"/>
</dbReference>
<dbReference type="GO" id="GO:0003723">
    <property type="term" value="F:RNA binding"/>
    <property type="evidence" value="ECO:0007669"/>
    <property type="project" value="UniProtKB-UniRule"/>
</dbReference>
<dbReference type="GO" id="GO:0051028">
    <property type="term" value="P:mRNA transport"/>
    <property type="evidence" value="ECO:0007669"/>
    <property type="project" value="UniProtKB-UniRule"/>
</dbReference>
<dbReference type="GO" id="GO:0016032">
    <property type="term" value="P:viral process"/>
    <property type="evidence" value="ECO:0007669"/>
    <property type="project" value="UniProtKB-UniRule"/>
</dbReference>
<dbReference type="Gene3D" id="6.10.140.630">
    <property type="match status" value="1"/>
</dbReference>
<dbReference type="HAMAP" id="MF_04077">
    <property type="entry name" value="REV_HIV1"/>
    <property type="match status" value="1"/>
</dbReference>
<dbReference type="InterPro" id="IPR000625">
    <property type="entry name" value="REV_protein"/>
</dbReference>
<dbReference type="Pfam" id="PF00424">
    <property type="entry name" value="REV"/>
    <property type="match status" value="1"/>
</dbReference>
<evidence type="ECO:0000255" key="1">
    <source>
        <dbReference type="HAMAP-Rule" id="MF_04077"/>
    </source>
</evidence>
<evidence type="ECO:0000256" key="2">
    <source>
        <dbReference type="SAM" id="MobiDB-lite"/>
    </source>
</evidence>
<proteinExistence type="inferred from homology"/>
<organism>
    <name type="scientific">Human immunodeficiency virus type 1 group M subtype D (isolate ELI)</name>
    <name type="common">HIV-1</name>
    <dbReference type="NCBI Taxonomy" id="11689"/>
    <lineage>
        <taxon>Viruses</taxon>
        <taxon>Riboviria</taxon>
        <taxon>Pararnavirae</taxon>
        <taxon>Artverviricota</taxon>
        <taxon>Revtraviricetes</taxon>
        <taxon>Ortervirales</taxon>
        <taxon>Retroviridae</taxon>
        <taxon>Orthoretrovirinae</taxon>
        <taxon>Lentivirus</taxon>
        <taxon>Human immunodeficiency virus type 1</taxon>
    </lineage>
</organism>
<gene>
    <name evidence="1" type="primary">rev</name>
</gene>
<organismHost>
    <name type="scientific">Homo sapiens</name>
    <name type="common">Human</name>
    <dbReference type="NCBI Taxonomy" id="9606"/>
</organismHost>
<feature type="chain" id="PRO_0000085264" description="Protein Rev">
    <location>
        <begin position="1"/>
        <end position="118"/>
    </location>
</feature>
<feature type="region of interest" description="Homomultimerization" evidence="1">
    <location>
        <begin position="18"/>
        <end position="26"/>
    </location>
</feature>
<feature type="region of interest" description="Disordered" evidence="2">
    <location>
        <begin position="23"/>
        <end position="46"/>
    </location>
</feature>
<feature type="region of interest" description="Disordered" evidence="2">
    <location>
        <begin position="87"/>
        <end position="118"/>
    </location>
</feature>
<feature type="short sequence motif" description="Nuclear localization signal and RNA-binding (RRE)" evidence="1">
    <location>
        <begin position="34"/>
        <end position="50"/>
    </location>
</feature>
<feature type="short sequence motif" description="Nuclear export signal and binding to XPO1" evidence="1">
    <location>
        <begin position="73"/>
        <end position="84"/>
    </location>
</feature>
<feature type="compositionally biased region" description="Basic residues" evidence="2">
    <location>
        <begin position="36"/>
        <end position="46"/>
    </location>
</feature>
<feature type="compositionally biased region" description="Polar residues" evidence="2">
    <location>
        <begin position="103"/>
        <end position="112"/>
    </location>
</feature>
<feature type="modified residue" description="Phosphoserine; by host CK2" evidence="1">
    <location>
        <position position="5"/>
    </location>
</feature>
<feature type="modified residue" description="Phosphoserine; by host CK2" evidence="1">
    <location>
        <position position="8"/>
    </location>
</feature>
<feature type="modified residue" description="Phosphoserine; by host" evidence="1">
    <location>
        <position position="92"/>
    </location>
</feature>
<comment type="function">
    <text evidence="1">Escorts unspliced or incompletely spliced viral pre-mRNAs (late transcripts) out of the nucleus of infected cells. These pre-mRNAs carry a recognition sequence called Rev responsive element (RRE) located in the env gene, that is not present in fully spliced viral mRNAs (early transcripts). This function is essential since most viral proteins are translated from unspliced or partially spliced pre-mRNAs which cannot exit the nucleus by the pathway used by fully processed cellular mRNAs. Rev itself is translated from a fully spliced mRNA that readily exits the nucleus. Rev's nuclear localization signal (NLS) binds directly to KPNB1/Importin beta-1 without previous binding to KPNA1/Importin alpha-1. KPNB1 binds to the GDP bound form of RAN (Ran-GDP) and targets Rev to the nucleus. In the nucleus, the conversion from Ran-GDP to Ran-GTP dissociates Rev from KPNB1 and allows Rev's binding to the RRE in viral pre-mRNAs. Rev multimerization on the RRE via cooperative assembly exposes its nuclear export signal (NES) to the surface. Rev can then form a complex with XPO1/CRM1 and Ran-GTP, leading to nuclear export of the complex. Conversion from Ran-GTP to Ran-GDP mediates dissociation of the Rev/RRE/XPO1/RAN complex, so that Rev can return to the nucleus for a subsequent round of export. Beside KPNB1, also seems to interact with TNPO1/Transportin-1, RANBP5/IPO5 and IPO7/RANBP7 for nuclear import. The nucleoporin-like HRB/RIP is an essential cofactor that probably indirectly interacts with Rev to release HIV RNAs from the perinuclear region to the cytoplasm.</text>
</comment>
<comment type="subunit">
    <text evidence="1">Homomultimer; when bound to the RRE. Multimeric assembly is essential for activity and may involve XPO1. Binds to human KPNB1, XPO1, TNPO1, RANBP5 and IPO7. Interacts with the viral Integrase. Interacts with human KHDRBS1. Interacts with human NAP1; this interaction decreases Rev multimerization and stimulates its activity. Interacts with human DEAD-box helicases DDX3 and DDX24; these interactions may serve for viral RNA export to the cytoplasm and packaging, respectively. Interacts with human PSIP1; this interaction may inhibit HIV-1 DNA integration by promoting dissociation of the Integrase-LEDGF/p75 complex.</text>
</comment>
<comment type="subcellular location">
    <subcellularLocation>
        <location evidence="1">Host nucleus</location>
        <location evidence="1">Host nucleolus</location>
    </subcellularLocation>
    <subcellularLocation>
        <location evidence="1">Host cytoplasm</location>
    </subcellularLocation>
    <text evidence="1">The presence of both nuclear import and nuclear export signals leads to continuous shuttling between the nucleus and cytoplasm.</text>
</comment>
<comment type="domain">
    <text evidence="1">The RNA-binding motif binds to the RRE, a 240 bp stem-and-loop structure present in incompletely spliced viral pre-mRNAs. This region also contains the NLS which mediates nuclear localization via KPNB1 binding and, when the N-terminal sequence is present, nucleolar targeting. These overlapping functions prevent Rev bound to RRE from undesirable return to the nucleus. When Rev binds the RRE, the NLS becomes masked while the NES remains accessible. The leucine-rich NES mediates binding to human XPO1.</text>
</comment>
<comment type="PTM">
    <text evidence="1">Asymmetrically arginine dimethylated at one site by host PRMT6. Methylation impairs the RNA-binding activity and export of viral RNA from the nucleus to the cytoplasm.</text>
</comment>
<comment type="PTM">
    <text evidence="1">Phosphorylated by protein kinase CK2. Presence of, and maybe binding to the N-terminus of the regulatory beta subunit of CK2 is necessary for CK2-mediated Rev's phosphorylation.</text>
</comment>
<comment type="miscellaneous">
    <text evidence="1">HIV-1 lineages are divided in three main groups, M (for Major), O (for Outlier), and N (for New, or Non-M, Non-O). The vast majority of strains found worldwide belong to the group M. Group O seems to be endemic to and largely confined to Cameroon and neighboring countries in West Central Africa, where these viruses represent a small minority of HIV-1 strains. The group N is represented by a limited number of isolates from Cameroonian persons. The group M is further subdivided in 9 clades or subtypes (A to D, F to H, J and K).</text>
</comment>
<comment type="similarity">
    <text evidence="1">Belongs to the HIV-1 REV protein family.</text>
</comment>
<keyword id="KW-0014">AIDS</keyword>
<keyword id="KW-1035">Host cytoplasm</keyword>
<keyword id="KW-1048">Host nucleus</keyword>
<keyword id="KW-0945">Host-virus interaction</keyword>
<keyword id="KW-0488">Methylation</keyword>
<keyword id="KW-0509">mRNA transport</keyword>
<keyword id="KW-0597">Phosphoprotein</keyword>
<keyword id="KW-1185">Reference proteome</keyword>
<keyword id="KW-0694">RNA-binding</keyword>
<keyword id="KW-0813">Transport</keyword>
<accession>P04621</accession>
<protein>
    <recommendedName>
        <fullName evidence="1">Protein Rev</fullName>
    </recommendedName>
    <alternativeName>
        <fullName evidence="1">ART/TRS</fullName>
    </alternativeName>
    <alternativeName>
        <fullName evidence="1">Anti-repression transactivator</fullName>
    </alternativeName>
    <alternativeName>
        <fullName evidence="1">Regulator of expression of viral proteins</fullName>
    </alternativeName>
</protein>
<name>REV_HV1EL</name>
<sequence length="118" mass="13347">MAGRSGDSDEDLLKAVRLIKFLYQSNPPPSPEGTRQARRNRRRRWRARQRQIREIAERILGTYLGRPAEPVPLQLPPLERLNLNCSEDCRTSGTQGVGHPQISVESPTVLESGTEEQC</sequence>